<comment type="function">
    <text evidence="1">Catalyzes the conversion of pppGpp to ppGpp. Guanosine pentaphosphate (pppGpp) is a cytoplasmic signaling molecule which together with ppGpp controls the 'stringent response', an adaptive process that allows bacteria to respond to amino acid starvation, resulting in the coordinated regulation of numerous cellular activities.</text>
</comment>
<comment type="catalytic activity">
    <reaction evidence="1">
        <text>guanosine 3'-diphosphate 5'-triphosphate + H2O = guanosine 3',5'-bis(diphosphate) + phosphate + H(+)</text>
        <dbReference type="Rhea" id="RHEA:13073"/>
        <dbReference type="ChEBI" id="CHEBI:15377"/>
        <dbReference type="ChEBI" id="CHEBI:15378"/>
        <dbReference type="ChEBI" id="CHEBI:43474"/>
        <dbReference type="ChEBI" id="CHEBI:77828"/>
        <dbReference type="ChEBI" id="CHEBI:142410"/>
        <dbReference type="EC" id="3.6.1.40"/>
    </reaction>
</comment>
<comment type="pathway">
    <text evidence="1">Purine metabolism; ppGpp biosynthesis; ppGpp from GTP: step 2/2.</text>
</comment>
<comment type="similarity">
    <text evidence="1">Belongs to the GppA/Ppx family. GppA subfamily.</text>
</comment>
<name>GPPA_CITK8</name>
<feature type="chain" id="PRO_1000068820" description="Guanosine-5'-triphosphate,3'-diphosphate pyrophosphatase">
    <location>
        <begin position="1"/>
        <end position="494"/>
    </location>
</feature>
<accession>A8ACT2</accession>
<proteinExistence type="inferred from homology"/>
<organism>
    <name type="scientific">Citrobacter koseri (strain ATCC BAA-895 / CDC 4225-83 / SGSC4696)</name>
    <dbReference type="NCBI Taxonomy" id="290338"/>
    <lineage>
        <taxon>Bacteria</taxon>
        <taxon>Pseudomonadati</taxon>
        <taxon>Pseudomonadota</taxon>
        <taxon>Gammaproteobacteria</taxon>
        <taxon>Enterobacterales</taxon>
        <taxon>Enterobacteriaceae</taxon>
        <taxon>Citrobacter</taxon>
    </lineage>
</organism>
<keyword id="KW-0378">Hydrolase</keyword>
<keyword id="KW-1185">Reference proteome</keyword>
<protein>
    <recommendedName>
        <fullName evidence="1">Guanosine-5'-triphosphate,3'-diphosphate pyrophosphatase</fullName>
        <ecNumber evidence="1">3.6.1.40</ecNumber>
    </recommendedName>
    <alternativeName>
        <fullName evidence="1">Guanosine pentaphosphate phosphohydrolase</fullName>
    </alternativeName>
    <alternativeName>
        <fullName evidence="1">pppGpp-5'-phosphohydrolase</fullName>
    </alternativeName>
</protein>
<dbReference type="EC" id="3.6.1.40" evidence="1"/>
<dbReference type="EMBL" id="CP000822">
    <property type="protein sequence ID" value="ABV11295.1"/>
    <property type="molecule type" value="Genomic_DNA"/>
</dbReference>
<dbReference type="RefSeq" id="WP_012131131.1">
    <property type="nucleotide sequence ID" value="NC_009792.1"/>
</dbReference>
<dbReference type="SMR" id="A8ACT2"/>
<dbReference type="STRING" id="290338.CKO_00121"/>
<dbReference type="GeneID" id="45134419"/>
<dbReference type="KEGG" id="cko:CKO_00121"/>
<dbReference type="HOGENOM" id="CLU_025908_4_0_6"/>
<dbReference type="OrthoDB" id="9793035at2"/>
<dbReference type="UniPathway" id="UPA00908">
    <property type="reaction ID" value="UER00885"/>
</dbReference>
<dbReference type="Proteomes" id="UP000008148">
    <property type="component" value="Chromosome"/>
</dbReference>
<dbReference type="GO" id="GO:0008894">
    <property type="term" value="F:guanosine-5'-triphosphate,3'-diphosphate diphosphatase activity"/>
    <property type="evidence" value="ECO:0007669"/>
    <property type="project" value="UniProtKB-UniRule"/>
</dbReference>
<dbReference type="GO" id="GO:0015974">
    <property type="term" value="P:guanosine pentaphosphate catabolic process"/>
    <property type="evidence" value="ECO:0007669"/>
    <property type="project" value="InterPro"/>
</dbReference>
<dbReference type="GO" id="GO:0015970">
    <property type="term" value="P:guanosine tetraphosphate biosynthetic process"/>
    <property type="evidence" value="ECO:0007669"/>
    <property type="project" value="UniProtKB-UniRule"/>
</dbReference>
<dbReference type="GO" id="GO:0015949">
    <property type="term" value="P:nucleobase-containing small molecule interconversion"/>
    <property type="evidence" value="ECO:0007669"/>
    <property type="project" value="TreeGrafter"/>
</dbReference>
<dbReference type="CDD" id="cd24117">
    <property type="entry name" value="ASKHA_NBD_EcGppA-like"/>
    <property type="match status" value="1"/>
</dbReference>
<dbReference type="FunFam" id="1.10.3210.10:FF:000004">
    <property type="entry name" value="Guanosine-5'-triphosphate,3'-diphosphate pyrophosphatase"/>
    <property type="match status" value="1"/>
</dbReference>
<dbReference type="FunFam" id="3.30.420.150:FF:000001">
    <property type="entry name" value="Guanosine-5'-triphosphate,3'-diphosphate pyrophosphatase"/>
    <property type="match status" value="1"/>
</dbReference>
<dbReference type="FunFam" id="3.30.420.40:FF:000023">
    <property type="entry name" value="Guanosine-5'-triphosphate,3'-diphosphate pyrophosphatase"/>
    <property type="match status" value="1"/>
</dbReference>
<dbReference type="Gene3D" id="3.30.420.40">
    <property type="match status" value="1"/>
</dbReference>
<dbReference type="Gene3D" id="3.30.420.150">
    <property type="entry name" value="Exopolyphosphatase. Domain 2"/>
    <property type="match status" value="1"/>
</dbReference>
<dbReference type="Gene3D" id="1.10.3210.10">
    <property type="entry name" value="Hypothetical protein af1432"/>
    <property type="match status" value="1"/>
</dbReference>
<dbReference type="HAMAP" id="MF_01550">
    <property type="entry name" value="GppA"/>
    <property type="match status" value="1"/>
</dbReference>
<dbReference type="InterPro" id="IPR043129">
    <property type="entry name" value="ATPase_NBD"/>
</dbReference>
<dbReference type="InterPro" id="IPR050273">
    <property type="entry name" value="GppA/Ppx_hydrolase"/>
</dbReference>
<dbReference type="InterPro" id="IPR023709">
    <property type="entry name" value="Guo-5TP_3DP_PyrP"/>
</dbReference>
<dbReference type="InterPro" id="IPR048950">
    <property type="entry name" value="Ppx_GppA_C"/>
</dbReference>
<dbReference type="InterPro" id="IPR003695">
    <property type="entry name" value="Ppx_GppA_N"/>
</dbReference>
<dbReference type="InterPro" id="IPR030673">
    <property type="entry name" value="PyroPPase_GppA_Ppx"/>
</dbReference>
<dbReference type="NCBIfam" id="NF008260">
    <property type="entry name" value="PRK11031.1"/>
    <property type="match status" value="1"/>
</dbReference>
<dbReference type="PANTHER" id="PTHR30005">
    <property type="entry name" value="EXOPOLYPHOSPHATASE"/>
    <property type="match status" value="1"/>
</dbReference>
<dbReference type="PANTHER" id="PTHR30005:SF0">
    <property type="entry name" value="RETROGRADE REGULATION PROTEIN 2"/>
    <property type="match status" value="1"/>
</dbReference>
<dbReference type="Pfam" id="PF02541">
    <property type="entry name" value="Ppx-GppA"/>
    <property type="match status" value="1"/>
</dbReference>
<dbReference type="Pfam" id="PF21447">
    <property type="entry name" value="Ppx-GppA_III"/>
    <property type="match status" value="1"/>
</dbReference>
<dbReference type="PIRSF" id="PIRSF001267">
    <property type="entry name" value="Pyrophosphatase_GppA_Ppx"/>
    <property type="match status" value="1"/>
</dbReference>
<dbReference type="SUPFAM" id="SSF53067">
    <property type="entry name" value="Actin-like ATPase domain"/>
    <property type="match status" value="2"/>
</dbReference>
<dbReference type="SUPFAM" id="SSF109604">
    <property type="entry name" value="HD-domain/PDEase-like"/>
    <property type="match status" value="1"/>
</dbReference>
<gene>
    <name evidence="1" type="primary">gppA</name>
    <name type="ordered locus">CKO_00121</name>
</gene>
<evidence type="ECO:0000255" key="1">
    <source>
        <dbReference type="HAMAP-Rule" id="MF_01550"/>
    </source>
</evidence>
<reference key="1">
    <citation type="submission" date="2007-08" db="EMBL/GenBank/DDBJ databases">
        <authorList>
            <consortium name="The Citrobacter koseri Genome Sequencing Project"/>
            <person name="McClelland M."/>
            <person name="Sanderson E.K."/>
            <person name="Porwollik S."/>
            <person name="Spieth J."/>
            <person name="Clifton W.S."/>
            <person name="Latreille P."/>
            <person name="Courtney L."/>
            <person name="Wang C."/>
            <person name="Pepin K."/>
            <person name="Bhonagiri V."/>
            <person name="Nash W."/>
            <person name="Johnson M."/>
            <person name="Thiruvilangam P."/>
            <person name="Wilson R."/>
        </authorList>
    </citation>
    <scope>NUCLEOTIDE SEQUENCE [LARGE SCALE GENOMIC DNA]</scope>
    <source>
        <strain>ATCC BAA-895 / CDC 4225-83 / SGSC4696</strain>
    </source>
</reference>
<sequence>MLTSTSLYAAIDLGSNSFHMLVVREVAGSIQTLTRIKRKVRLAAGLNSDNSLSAEAMERGWQCLRLFAERLQDIPQPQICVVATATLRLAVNAGEFIAKAQEILGCPVQVISGEEEARLIYQGVAHTTGGADQRLVVDIGGASTELVTGTGAQTTSLFSLSMGCVTWLERYFTDRNLAQENFDEAEKAAREVLRPVADELRKHGWKVCVGASGTVQALQEIMMAQGMDERITLAKLQQLKQRAIHCGRLEELEIEGLTLERALVFPSGLAILIAIFTELDIQCMTLAGGALREGLVYGMLHLAVDQDIRSRTLRNIQRRFMVDTEQAHRVADLAVNFLDQVEDKWHLEPISRELLTSACQLHEIGLSVDFKQAPQHAAYLVRNLDLPGFTPAQKKLLATLLLNQTNPIDLSSLHQQNAVPPRVAEHLCRLLRLAIIFASRRRDDLVPQITLQAQDENLTLTLPQGWLEHHPLGKELIDQESQWQSYVHWPLDVH</sequence>